<keyword id="KW-0028">Amino-acid biosynthesis</keyword>
<keyword id="KW-0413">Isomerase</keyword>
<keyword id="KW-0486">Methionine biosynthesis</keyword>
<comment type="function">
    <text evidence="1">Catalyzes the interconversion of methylthioribose-1-phosphate (MTR-1-P) into methylthioribulose-1-phosphate (MTRu-1-P).</text>
</comment>
<comment type="catalytic activity">
    <reaction evidence="1">
        <text>5-(methylsulfanyl)-alpha-D-ribose 1-phosphate = 5-(methylsulfanyl)-D-ribulose 1-phosphate</text>
        <dbReference type="Rhea" id="RHEA:19989"/>
        <dbReference type="ChEBI" id="CHEBI:58533"/>
        <dbReference type="ChEBI" id="CHEBI:58548"/>
        <dbReference type="EC" id="5.3.1.23"/>
    </reaction>
</comment>
<comment type="pathway">
    <text evidence="1">Amino-acid biosynthesis; L-methionine biosynthesis via salvage pathway; L-methionine from S-methyl-5-thio-alpha-D-ribose 1-phosphate: step 1/6.</text>
</comment>
<comment type="similarity">
    <text evidence="2">Belongs to the eIF-2B alpha/beta/delta subunits family. MtnA subfamily.</text>
</comment>
<organism>
    <name type="scientific">Yersinia pestis bv. Antiqua (strain Angola)</name>
    <dbReference type="NCBI Taxonomy" id="349746"/>
    <lineage>
        <taxon>Bacteria</taxon>
        <taxon>Pseudomonadati</taxon>
        <taxon>Pseudomonadota</taxon>
        <taxon>Gammaproteobacteria</taxon>
        <taxon>Enterobacterales</taxon>
        <taxon>Yersiniaceae</taxon>
        <taxon>Yersinia</taxon>
    </lineage>
</organism>
<proteinExistence type="inferred from homology"/>
<accession>A9R2Z5</accession>
<gene>
    <name evidence="1" type="primary">mtnA</name>
    <name type="ordered locus">YpAngola_A3328</name>
</gene>
<reference key="1">
    <citation type="journal article" date="2010" name="J. Bacteriol.">
        <title>Genome sequence of the deep-rooted Yersinia pestis strain Angola reveals new insights into the evolution and pangenome of the plague bacterium.</title>
        <authorList>
            <person name="Eppinger M."/>
            <person name="Worsham P.L."/>
            <person name="Nikolich M.P."/>
            <person name="Riley D.R."/>
            <person name="Sebastian Y."/>
            <person name="Mou S."/>
            <person name="Achtman M."/>
            <person name="Lindler L.E."/>
            <person name="Ravel J."/>
        </authorList>
    </citation>
    <scope>NUCLEOTIDE SEQUENCE [LARGE SCALE GENOMIC DNA]</scope>
    <source>
        <strain>Angola</strain>
    </source>
</reference>
<name>MTNA_YERPG</name>
<feature type="chain" id="PRO_0000357279" description="Methylthioribose-1-phosphate isomerase">
    <location>
        <begin position="1"/>
        <end position="346"/>
    </location>
</feature>
<feature type="active site" description="Proton donor" evidence="1">
    <location>
        <position position="233"/>
    </location>
</feature>
<feature type="binding site" evidence="1">
    <location>
        <begin position="54"/>
        <end position="56"/>
    </location>
    <ligand>
        <name>substrate</name>
    </ligand>
</feature>
<feature type="binding site" evidence="1">
    <location>
        <position position="91"/>
    </location>
    <ligand>
        <name>substrate</name>
    </ligand>
</feature>
<feature type="binding site" evidence="1">
    <location>
        <position position="192"/>
    </location>
    <ligand>
        <name>substrate</name>
    </ligand>
</feature>
<feature type="binding site" evidence="1">
    <location>
        <begin position="243"/>
        <end position="244"/>
    </location>
    <ligand>
        <name>substrate</name>
    </ligand>
</feature>
<feature type="site" description="Transition state stabilizer" evidence="1">
    <location>
        <position position="153"/>
    </location>
</feature>
<dbReference type="EC" id="5.3.1.23" evidence="1"/>
<dbReference type="EMBL" id="CP000901">
    <property type="protein sequence ID" value="ABX87425.1"/>
    <property type="molecule type" value="Genomic_DNA"/>
</dbReference>
<dbReference type="RefSeq" id="WP_011906391.1">
    <property type="nucleotide sequence ID" value="NZ_CP009935.1"/>
</dbReference>
<dbReference type="SMR" id="A9R2Z5"/>
<dbReference type="KEGG" id="ypg:YpAngola_A3328"/>
<dbReference type="PATRIC" id="fig|349746.12.peg.27"/>
<dbReference type="UniPathway" id="UPA00904">
    <property type="reaction ID" value="UER00874"/>
</dbReference>
<dbReference type="GO" id="GO:0046523">
    <property type="term" value="F:S-methyl-5-thioribose-1-phosphate isomerase activity"/>
    <property type="evidence" value="ECO:0007669"/>
    <property type="project" value="UniProtKB-UniRule"/>
</dbReference>
<dbReference type="GO" id="GO:0019509">
    <property type="term" value="P:L-methionine salvage from methylthioadenosine"/>
    <property type="evidence" value="ECO:0007669"/>
    <property type="project" value="UniProtKB-UniRule"/>
</dbReference>
<dbReference type="FunFam" id="3.40.50.10470:FF:000006">
    <property type="entry name" value="Methylthioribose-1-phosphate isomerase"/>
    <property type="match status" value="1"/>
</dbReference>
<dbReference type="Gene3D" id="1.20.120.420">
    <property type="entry name" value="translation initiation factor eif-2b, domain 1"/>
    <property type="match status" value="1"/>
</dbReference>
<dbReference type="Gene3D" id="3.40.50.10470">
    <property type="entry name" value="Translation initiation factor eif-2b, domain 2"/>
    <property type="match status" value="1"/>
</dbReference>
<dbReference type="HAMAP" id="MF_01678">
    <property type="entry name" value="Salvage_MtnA"/>
    <property type="match status" value="1"/>
</dbReference>
<dbReference type="InterPro" id="IPR000649">
    <property type="entry name" value="IF-2B-related"/>
</dbReference>
<dbReference type="InterPro" id="IPR005251">
    <property type="entry name" value="IF-M1Pi"/>
</dbReference>
<dbReference type="InterPro" id="IPR042529">
    <property type="entry name" value="IF_2B-like_C"/>
</dbReference>
<dbReference type="InterPro" id="IPR011559">
    <property type="entry name" value="Initiation_fac_2B_a/b/d"/>
</dbReference>
<dbReference type="InterPro" id="IPR027363">
    <property type="entry name" value="M1Pi_N"/>
</dbReference>
<dbReference type="InterPro" id="IPR037171">
    <property type="entry name" value="NagB/RpiA_transferase-like"/>
</dbReference>
<dbReference type="NCBIfam" id="TIGR00524">
    <property type="entry name" value="eIF-2B_rel"/>
    <property type="match status" value="1"/>
</dbReference>
<dbReference type="NCBIfam" id="NF004326">
    <property type="entry name" value="PRK05720.1"/>
    <property type="match status" value="1"/>
</dbReference>
<dbReference type="NCBIfam" id="TIGR00512">
    <property type="entry name" value="salvage_mtnA"/>
    <property type="match status" value="1"/>
</dbReference>
<dbReference type="PANTHER" id="PTHR43475">
    <property type="entry name" value="METHYLTHIORIBOSE-1-PHOSPHATE ISOMERASE"/>
    <property type="match status" value="1"/>
</dbReference>
<dbReference type="PANTHER" id="PTHR43475:SF1">
    <property type="entry name" value="METHYLTHIORIBOSE-1-PHOSPHATE ISOMERASE"/>
    <property type="match status" value="1"/>
</dbReference>
<dbReference type="Pfam" id="PF01008">
    <property type="entry name" value="IF-2B"/>
    <property type="match status" value="1"/>
</dbReference>
<dbReference type="SUPFAM" id="SSF100950">
    <property type="entry name" value="NagB/RpiA/CoA transferase-like"/>
    <property type="match status" value="1"/>
</dbReference>
<sequence>MQTLNTLDLQTTSLKIVNGQLWILDQQALPQRQEWLLADTVASLIEHIQALRVRGAPLIGLSASLLLALLAERGLSQALLEQALIALRESRPTAVNLMNNLARMQQALLQPNWVTAMAAEALRLVDEDRELCERIAQHGAALVKPGSNLLTHCNTGGLATAGIGTAIGVLLRAHQQGNLRQVWVDETRPLLQGGRLTAWELGELGIPYQLICDSMAASLMAQGQVDAIWVGADRIAANGDVANKIGTYSLAVLAHYHRIPFYVAAPHTTHDPDCPDGAAIPIEQRAASEVTGVSGGFGHCQWAPEDAAVYNPAFDVTPAALISGWVLDSGVITPEQVAAGFFQPHR</sequence>
<protein>
    <recommendedName>
        <fullName evidence="1">Methylthioribose-1-phosphate isomerase</fullName>
        <shortName evidence="1">M1Pi</shortName>
        <shortName evidence="1">MTR-1-P isomerase</shortName>
        <ecNumber evidence="1">5.3.1.23</ecNumber>
    </recommendedName>
    <alternativeName>
        <fullName evidence="1">S-methyl-5-thioribose-1-phosphate isomerase</fullName>
    </alternativeName>
</protein>
<evidence type="ECO:0000255" key="1">
    <source>
        <dbReference type="HAMAP-Rule" id="MF_01678"/>
    </source>
</evidence>
<evidence type="ECO:0000305" key="2"/>